<comment type="function">
    <text evidence="1">Transcription factor which regulates nonfermentable carbon utilization. Activator of gluconeogenetic genes (By similarity).</text>
</comment>
<comment type="subcellular location">
    <subcellularLocation>
        <location evidence="2">Nucleus</location>
    </subcellularLocation>
</comment>
<comment type="similarity">
    <text evidence="4">Belongs to the ERT1/acuK family.</text>
</comment>
<gene>
    <name type="primary">ERT1</name>
    <name type="ordered locus">DEHA2A12738g</name>
</gene>
<proteinExistence type="inferred from homology"/>
<accession>Q6BY37</accession>
<reference key="1">
    <citation type="journal article" date="2004" name="Nature">
        <title>Genome evolution in yeasts.</title>
        <authorList>
            <person name="Dujon B."/>
            <person name="Sherman D."/>
            <person name="Fischer G."/>
            <person name="Durrens P."/>
            <person name="Casaregola S."/>
            <person name="Lafontaine I."/>
            <person name="de Montigny J."/>
            <person name="Marck C."/>
            <person name="Neuveglise C."/>
            <person name="Talla E."/>
            <person name="Goffard N."/>
            <person name="Frangeul L."/>
            <person name="Aigle M."/>
            <person name="Anthouard V."/>
            <person name="Babour A."/>
            <person name="Barbe V."/>
            <person name="Barnay S."/>
            <person name="Blanchin S."/>
            <person name="Beckerich J.-M."/>
            <person name="Beyne E."/>
            <person name="Bleykasten C."/>
            <person name="Boisrame A."/>
            <person name="Boyer J."/>
            <person name="Cattolico L."/>
            <person name="Confanioleri F."/>
            <person name="de Daruvar A."/>
            <person name="Despons L."/>
            <person name="Fabre E."/>
            <person name="Fairhead C."/>
            <person name="Ferry-Dumazet H."/>
            <person name="Groppi A."/>
            <person name="Hantraye F."/>
            <person name="Hennequin C."/>
            <person name="Jauniaux N."/>
            <person name="Joyet P."/>
            <person name="Kachouri R."/>
            <person name="Kerrest A."/>
            <person name="Koszul R."/>
            <person name="Lemaire M."/>
            <person name="Lesur I."/>
            <person name="Ma L."/>
            <person name="Muller H."/>
            <person name="Nicaud J.-M."/>
            <person name="Nikolski M."/>
            <person name="Oztas S."/>
            <person name="Ozier-Kalogeropoulos O."/>
            <person name="Pellenz S."/>
            <person name="Potier S."/>
            <person name="Richard G.-F."/>
            <person name="Straub M.-L."/>
            <person name="Suleau A."/>
            <person name="Swennen D."/>
            <person name="Tekaia F."/>
            <person name="Wesolowski-Louvel M."/>
            <person name="Westhof E."/>
            <person name="Wirth B."/>
            <person name="Zeniou-Meyer M."/>
            <person name="Zivanovic Y."/>
            <person name="Bolotin-Fukuhara M."/>
            <person name="Thierry A."/>
            <person name="Bouchier C."/>
            <person name="Caudron B."/>
            <person name="Scarpelli C."/>
            <person name="Gaillardin C."/>
            <person name="Weissenbach J."/>
            <person name="Wincker P."/>
            <person name="Souciet J.-L."/>
        </authorList>
    </citation>
    <scope>NUCLEOTIDE SEQUENCE [LARGE SCALE GENOMIC DNA]</scope>
    <source>
        <strain>ATCC 36239 / CBS 767 / BCRC 21394 / JCM 1990 / NBRC 0083 / IGC 2968</strain>
    </source>
</reference>
<protein>
    <recommendedName>
        <fullName>Transcription activator of gluconeogenesis ERT1</fullName>
    </recommendedName>
</protein>
<name>ERT1_DEBHA</name>
<evidence type="ECO:0000250" key="1"/>
<evidence type="ECO:0000255" key="2">
    <source>
        <dbReference type="PROSITE-ProRule" id="PRU00227"/>
    </source>
</evidence>
<evidence type="ECO:0000256" key="3">
    <source>
        <dbReference type="SAM" id="MobiDB-lite"/>
    </source>
</evidence>
<evidence type="ECO:0000305" key="4"/>
<feature type="chain" id="PRO_0000406461" description="Transcription activator of gluconeogenesis ERT1">
    <location>
        <begin position="1"/>
        <end position="571"/>
    </location>
</feature>
<feature type="domain" description="PAS">
    <location>
        <begin position="403"/>
        <end position="475"/>
    </location>
</feature>
<feature type="DNA-binding region" description="Zn(2)-C6 fungal-type" evidence="2">
    <location>
        <begin position="20"/>
        <end position="48"/>
    </location>
</feature>
<feature type="region of interest" description="Disordered" evidence="3">
    <location>
        <begin position="1"/>
        <end position="25"/>
    </location>
</feature>
<feature type="region of interest" description="Disordered" evidence="3">
    <location>
        <begin position="76"/>
        <end position="117"/>
    </location>
</feature>
<feature type="region of interest" description="Disordered" evidence="3">
    <location>
        <begin position="141"/>
        <end position="187"/>
    </location>
</feature>
<feature type="region of interest" description="Disordered" evidence="3">
    <location>
        <begin position="216"/>
        <end position="282"/>
    </location>
</feature>
<feature type="compositionally biased region" description="Low complexity" evidence="3">
    <location>
        <begin position="10"/>
        <end position="21"/>
    </location>
</feature>
<feature type="compositionally biased region" description="Polar residues" evidence="3">
    <location>
        <begin position="143"/>
        <end position="180"/>
    </location>
</feature>
<feature type="compositionally biased region" description="Polar residues" evidence="3">
    <location>
        <begin position="216"/>
        <end position="238"/>
    </location>
</feature>
<feature type="compositionally biased region" description="Low complexity" evidence="3">
    <location>
        <begin position="239"/>
        <end position="256"/>
    </location>
</feature>
<feature type="compositionally biased region" description="Polar residues" evidence="3">
    <location>
        <begin position="257"/>
        <end position="282"/>
    </location>
</feature>
<keyword id="KW-0010">Activator</keyword>
<keyword id="KW-0238">DNA-binding</keyword>
<keyword id="KW-0312">Gluconeogenesis</keyword>
<keyword id="KW-0479">Metal-binding</keyword>
<keyword id="KW-0539">Nucleus</keyword>
<keyword id="KW-1185">Reference proteome</keyword>
<keyword id="KW-0804">Transcription</keyword>
<keyword id="KW-0805">Transcription regulation</keyword>
<keyword id="KW-0862">Zinc</keyword>
<sequence length="571" mass="64335">MSEIKNEPMSNSDSVASSNSAKMRRKKTNRACNHCHKAHMTCDTNRPCQRCLQRGLESSCQDAPRKRKKYLADVPPNVLSRHDGLSQSPPYEMGKNDTINYQSGPFQERPPSSEFNPPMPTANTDNDINQDFGAFGVYPNSHLFPSNTNQTNQDAGADMSHSQGQSKPPINQHMHQQGLPSYNKPRRTNFLSSAADLEYSTLSSILQDNFVHVNNNTSAEGTPNSLNLSPSVLPNNAPNTNITDSRNTTSSNSLNNYGQQNKPMNYTSGSSHASSPNDSIFNSKQMSSINGINKNKYYYSSKYPKCDESINQYFLGPTGSDHELIYPDVITAIEEMKALDPAVYHERNSKSSLSFTIGIIPESNEYTKGRKPQENKETFKEPDEIYAKVNKPFSYTPGYHSLIAYLRKRFPKEMLVKMAESIAAYRPSFIACTNSLKESDLIFMEQCFQRTLLTYDNFIRVSGTPTIVWRRTGEIAYVGNEFCVLTGWKKEDLLLNTKKFIVELLDDKSVVEYFQLFSKIAFGDFLGATMTECTLLTPKKDVKIRTGCMWTLKRDVFGIPMMIIGNFLPII</sequence>
<dbReference type="EMBL" id="CR382133">
    <property type="protein sequence ID" value="CAG84859.2"/>
    <property type="molecule type" value="Genomic_DNA"/>
</dbReference>
<dbReference type="RefSeq" id="XP_456882.2">
    <property type="nucleotide sequence ID" value="XM_456882.1"/>
</dbReference>
<dbReference type="SMR" id="Q6BY37"/>
<dbReference type="FunCoup" id="Q6BY37">
    <property type="interactions" value="284"/>
</dbReference>
<dbReference type="GeneID" id="2899379"/>
<dbReference type="KEGG" id="dha:DEHA2A12738g"/>
<dbReference type="VEuPathDB" id="FungiDB:DEHA2A12738g"/>
<dbReference type="eggNOG" id="ENOG502R1M5">
    <property type="taxonomic scope" value="Eukaryota"/>
</dbReference>
<dbReference type="HOGENOM" id="CLU_010748_2_3_1"/>
<dbReference type="InParanoid" id="Q6BY37"/>
<dbReference type="OMA" id="VMTTCKL"/>
<dbReference type="OrthoDB" id="2538135at2759"/>
<dbReference type="Proteomes" id="UP000000599">
    <property type="component" value="Chromosome A"/>
</dbReference>
<dbReference type="GO" id="GO:0005634">
    <property type="term" value="C:nucleus"/>
    <property type="evidence" value="ECO:0007669"/>
    <property type="project" value="UniProtKB-SubCell"/>
</dbReference>
<dbReference type="GO" id="GO:0000981">
    <property type="term" value="F:DNA-binding transcription factor activity, RNA polymerase II-specific"/>
    <property type="evidence" value="ECO:0007669"/>
    <property type="project" value="InterPro"/>
</dbReference>
<dbReference type="GO" id="GO:0000977">
    <property type="term" value="F:RNA polymerase II transcription regulatory region sequence-specific DNA binding"/>
    <property type="evidence" value="ECO:0007669"/>
    <property type="project" value="TreeGrafter"/>
</dbReference>
<dbReference type="GO" id="GO:0008270">
    <property type="term" value="F:zinc ion binding"/>
    <property type="evidence" value="ECO:0007669"/>
    <property type="project" value="InterPro"/>
</dbReference>
<dbReference type="GO" id="GO:0009267">
    <property type="term" value="P:cellular response to starvation"/>
    <property type="evidence" value="ECO:0007669"/>
    <property type="project" value="TreeGrafter"/>
</dbReference>
<dbReference type="GO" id="GO:0006094">
    <property type="term" value="P:gluconeogenesis"/>
    <property type="evidence" value="ECO:0007669"/>
    <property type="project" value="UniProtKB-KW"/>
</dbReference>
<dbReference type="CDD" id="cd00067">
    <property type="entry name" value="GAL4"/>
    <property type="match status" value="1"/>
</dbReference>
<dbReference type="Gene3D" id="4.10.240.10">
    <property type="entry name" value="Zn(2)-C6 fungal-type DNA-binding domain"/>
    <property type="match status" value="1"/>
</dbReference>
<dbReference type="InterPro" id="IPR050335">
    <property type="entry name" value="ERT1_acuK_gluconeogen_tf"/>
</dbReference>
<dbReference type="InterPro" id="IPR056751">
    <property type="entry name" value="PAS_13"/>
</dbReference>
<dbReference type="InterPro" id="IPR036864">
    <property type="entry name" value="Zn2-C6_fun-type_DNA-bd_sf"/>
</dbReference>
<dbReference type="InterPro" id="IPR001138">
    <property type="entry name" value="Zn2Cys6_DnaBD"/>
</dbReference>
<dbReference type="PANTHER" id="PTHR47659:SF1">
    <property type="entry name" value="TRANSCRIPTION ACTIVATOR OF GLUCONEOGENESIS ERT1"/>
    <property type="match status" value="1"/>
</dbReference>
<dbReference type="PANTHER" id="PTHR47659">
    <property type="entry name" value="ZN(II)2CYS6 TRANSCRIPTION FACTOR (EUROFUNG)-RELATED"/>
    <property type="match status" value="1"/>
</dbReference>
<dbReference type="Pfam" id="PF24990">
    <property type="entry name" value="PAS_13"/>
    <property type="match status" value="1"/>
</dbReference>
<dbReference type="Pfam" id="PF00172">
    <property type="entry name" value="Zn_clus"/>
    <property type="match status" value="1"/>
</dbReference>
<dbReference type="SMART" id="SM00066">
    <property type="entry name" value="GAL4"/>
    <property type="match status" value="1"/>
</dbReference>
<dbReference type="SUPFAM" id="SSF57701">
    <property type="entry name" value="Zn2/Cys6 DNA-binding domain"/>
    <property type="match status" value="1"/>
</dbReference>
<dbReference type="PROSITE" id="PS00463">
    <property type="entry name" value="ZN2_CY6_FUNGAL_1"/>
    <property type="match status" value="1"/>
</dbReference>
<dbReference type="PROSITE" id="PS50048">
    <property type="entry name" value="ZN2_CY6_FUNGAL_2"/>
    <property type="match status" value="1"/>
</dbReference>
<organism>
    <name type="scientific">Debaryomyces hansenii (strain ATCC 36239 / CBS 767 / BCRC 21394 / JCM 1990 / NBRC 0083 / IGC 2968)</name>
    <name type="common">Yeast</name>
    <name type="synonym">Torulaspora hansenii</name>
    <dbReference type="NCBI Taxonomy" id="284592"/>
    <lineage>
        <taxon>Eukaryota</taxon>
        <taxon>Fungi</taxon>
        <taxon>Dikarya</taxon>
        <taxon>Ascomycota</taxon>
        <taxon>Saccharomycotina</taxon>
        <taxon>Pichiomycetes</taxon>
        <taxon>Debaryomycetaceae</taxon>
        <taxon>Debaryomyces</taxon>
    </lineage>
</organism>